<proteinExistence type="evidence at protein level"/>
<feature type="chain" id="PRO_0000079986" description="DCC-interacting protein 13-alpha">
    <location>
        <begin position="1"/>
        <end position="707"/>
    </location>
</feature>
<feature type="domain" description="BAR" evidence="6">
    <location>
        <begin position="3"/>
        <end position="268"/>
    </location>
</feature>
<feature type="domain" description="PH" evidence="4">
    <location>
        <begin position="277"/>
        <end position="375"/>
    </location>
</feature>
<feature type="domain" description="PID" evidence="5">
    <location>
        <begin position="495"/>
        <end position="655"/>
    </location>
</feature>
<feature type="region of interest" description="Required for RAB5A binding" evidence="1">
    <location>
        <begin position="1"/>
        <end position="428"/>
    </location>
</feature>
<feature type="region of interest" description="Disordered" evidence="7">
    <location>
        <begin position="397"/>
        <end position="433"/>
    </location>
</feature>
<feature type="region of interest" description="Disordered" evidence="7">
    <location>
        <begin position="466"/>
        <end position="490"/>
    </location>
</feature>
<feature type="region of interest" description="Disordered" evidence="7">
    <location>
        <begin position="636"/>
        <end position="707"/>
    </location>
</feature>
<feature type="coiled-coil region" evidence="3">
    <location>
        <begin position="234"/>
        <end position="257"/>
    </location>
</feature>
<feature type="coiled-coil region" evidence="3">
    <location>
        <begin position="620"/>
        <end position="670"/>
    </location>
</feature>
<feature type="short sequence motif" description="F&amp;H" evidence="1">
    <location>
        <begin position="403"/>
        <end position="414"/>
    </location>
</feature>
<feature type="compositionally biased region" description="Basic and acidic residues" evidence="7">
    <location>
        <begin position="636"/>
        <end position="666"/>
    </location>
</feature>
<feature type="compositionally biased region" description="Low complexity" evidence="7">
    <location>
        <begin position="679"/>
        <end position="691"/>
    </location>
</feature>
<feature type="compositionally biased region" description="Basic and acidic residues" evidence="7">
    <location>
        <begin position="698"/>
        <end position="707"/>
    </location>
</feature>
<feature type="modified residue" description="Phosphothreonine" evidence="2">
    <location>
        <position position="399"/>
    </location>
</feature>
<feature type="modified residue" description="Phosphoserine" evidence="2">
    <location>
        <position position="401"/>
    </location>
</feature>
<feature type="modified residue" description="Phosphoserine; by PKA" evidence="2">
    <location>
        <position position="410"/>
    </location>
</feature>
<feature type="modified residue" description="Phosphoserine" evidence="21">
    <location>
        <position position="691"/>
    </location>
</feature>
<feature type="modified residue" description="Phosphoserine" evidence="21">
    <location>
        <position position="694"/>
    </location>
</feature>
<feature type="sequence conflict" description="In Ref. 2; BAB28966." evidence="16" ref="2">
    <original>M</original>
    <variation>K</variation>
    <location>
        <position position="37"/>
    </location>
</feature>
<feature type="sequence conflict" description="In Ref. 2; BAB28966." evidence="16" ref="2">
    <original>Q</original>
    <variation>P</variation>
    <location>
        <position position="117"/>
    </location>
</feature>
<feature type="sequence conflict" description="In Ref. 2; BAB28966." evidence="16" ref="2">
    <original>A</original>
    <variation>T</variation>
    <location>
        <position position="136"/>
    </location>
</feature>
<feature type="sequence conflict" description="In Ref. 2; BAB28966." evidence="16" ref="2">
    <original>S</original>
    <variation>P</variation>
    <location>
        <position position="151"/>
    </location>
</feature>
<organism>
    <name type="scientific">Mus musculus</name>
    <name type="common">Mouse</name>
    <dbReference type="NCBI Taxonomy" id="10090"/>
    <lineage>
        <taxon>Eukaryota</taxon>
        <taxon>Metazoa</taxon>
        <taxon>Chordata</taxon>
        <taxon>Craniata</taxon>
        <taxon>Vertebrata</taxon>
        <taxon>Euteleostomi</taxon>
        <taxon>Mammalia</taxon>
        <taxon>Eutheria</taxon>
        <taxon>Euarchontoglires</taxon>
        <taxon>Glires</taxon>
        <taxon>Rodentia</taxon>
        <taxon>Myomorpha</taxon>
        <taxon>Muroidea</taxon>
        <taxon>Muridae</taxon>
        <taxon>Murinae</taxon>
        <taxon>Mus</taxon>
        <taxon>Mus</taxon>
    </lineage>
</organism>
<comment type="function">
    <text evidence="2 11 12 13 14">Multifunctional adapter protein that binds to various membrane receptors, nuclear factors and signaling proteins to regulate many processes, such as cell proliferation, immune response, endosomal trafficking and cell metabolism (By similarity) (PubMed:25328665, PubMed:25568335, PubMed:27219021). Regulates signaling pathway leading to cell proliferation through interaction with RAB5A and subunits of the NuRD/MeCP1 complex (By similarity). Functions as a positive regulator of innate immune response via activation of AKT1 signaling pathway by forming a complex with APPL1 and PIK3R1 (PubMed:25328665). Inhibits Fc-gamma receptor-mediated phagocytosis through PI3K/Akt signaling in macrophages (PubMed:25568335). Regulates TLR4 signaling in activated macrophages (PubMed:27219021). Involved in trafficking of the TGFBR1 from the endosomes to the nucleus via microtubules in a TRAF6-dependent manner. Plays a role in cell metabolism by regulating adiponecting and insulin signaling pathways (By similarity). Required for fibroblast migration through HGF cell signaling (PubMed:26445298). Positive regulator of beta-catenin/TCF-dependent transcription through direct interaction with RUVBL2/reptin resulting in the relief of RUVBL2-mediated repression of beta-catenin/TCF target genes by modulating the interactions within the beta-catenin-reptin-HDAC complex (By similarity).</text>
</comment>
<comment type="subunit">
    <text evidence="2 8 9 10 11">Homodimer. Binds RAB5A/Rab5 through an N-terminal domain. This interaction is essential for its recruitment to endosomal membranes as well as its role in cell proliferation. Binds DCC and the catalytic domain of the inactive form of AKT2 through its PID domain. Binds PIK3CA and subunits of the NuRD/MeCP1 complex (By similarity). Interacts with OCRL and INPP5B (By similarity) (PubMed:20133602). Interacts with NTRK2 (PubMed:21849472). Interacts with APPL2; interaction is independent of follicle stimulating hormone stimulation; interaction is decreased by adiponectin in a time-dependent manner (PubMed:25328665). Forms a complex with APPL2 and RUVBL2. Forms a complex comprising APPL2, RUVBL2, CTNNB1, HDAC1 and HDAC2; interaction reduces interaction between CTNNB1, HDAC1, HDAC2 and RUVBL2 leading to the decrease of deacetylase activity of this complex; affects the recruitment of repressive complexes to the Wnt target genes. Interacts with ANXA2. Interacts with TGFBR1; interaction is TGF beta dependent; mediates trafficking of the TGFBR1 from the endosomes to the nucleus via microtubules in a TRAF6-dependent manner. Interacts with PRKCZ (By similarity). Interacts with PIK3R1 and APPL2 (PubMed:25328665). Interacts with ADIPOR1; ADIPOQ enhances this interaction; inhibites adiponectin-stimulated binding of APPL2 to ADIPOR1 (PubMed:19661063).</text>
</comment>
<comment type="subcellular location">
    <subcellularLocation>
        <location evidence="10">Early endosome membrane</location>
        <topology evidence="2">Peripheral membrane protein</topology>
    </subcellularLocation>
    <subcellularLocation>
        <location evidence="2">Nucleus</location>
    </subcellularLocation>
    <subcellularLocation>
        <location evidence="2">Cytoplasm</location>
    </subcellularLocation>
    <subcellularLocation>
        <location evidence="12 14">Endosome</location>
    </subcellularLocation>
    <subcellularLocation>
        <location evidence="12">Cell projection</location>
        <location evidence="12">Ruffle</location>
    </subcellularLocation>
    <subcellularLocation>
        <location evidence="12">Cytoplasmic vesicle</location>
        <location evidence="12">Phagosome</location>
    </subcellularLocation>
    <text evidence="2">Early endosomal membrane-bound and nuclear. Translocated into the nucleus upon release from endosomal membranes following internalization of EGF.</text>
</comment>
<comment type="tissue specificity">
    <text evidence="8">Expressed in insulin-target tissues including skeletal muscle, liver, fat, and brain.</text>
</comment>
<comment type="domain">
    <text evidence="2">Overexpression of an N-terminal domain (residues 1-319) or a C-terminal region (residues 273-707) has a proapoptotic effect.</text>
</comment>
<comment type="domain">
    <text evidence="2">The F&amp;H motif, an approximately 12-13 amino-acid sequence centered around Phe and His residues, is essential for binding to OCRL and INPP5B.</text>
</comment>
<comment type="PTM">
    <text evidence="2">Phosphorylation at Ser-410 by PKA severely impairs binding to OCRL.</text>
</comment>
<comment type="disruption phenotype">
    <text evidence="11 13">Reduced survival rate after injection of LPS (PubMed:25328665). Appl1 and Appl2 double knockout mice are viable and grossly normal with regard to reproductive potential and postnatal growth (PubMed:26445298).</text>
</comment>
<comment type="sequence caution" evidence="16">
    <conflict type="erroneous initiation">
        <sequence resource="EMBL-CDS" id="AAH19708"/>
    </conflict>
</comment>
<comment type="sequence caution" evidence="16">
    <conflict type="erroneous initiation">
        <sequence resource="EMBL-CDS" id="AAH19708"/>
    </conflict>
    <text>Extended N-terminus.</text>
</comment>
<gene>
    <name evidence="20" type="primary">Appl1</name>
    <name type="synonym">Dip13a</name>
    <name evidence="19" type="synonym">Kiaa1428</name>
</gene>
<evidence type="ECO:0000250" key="1"/>
<evidence type="ECO:0000250" key="2">
    <source>
        <dbReference type="UniProtKB" id="Q9UKG1"/>
    </source>
</evidence>
<evidence type="ECO:0000255" key="3"/>
<evidence type="ECO:0000255" key="4">
    <source>
        <dbReference type="PROSITE-ProRule" id="PRU00145"/>
    </source>
</evidence>
<evidence type="ECO:0000255" key="5">
    <source>
        <dbReference type="PROSITE-ProRule" id="PRU00148"/>
    </source>
</evidence>
<evidence type="ECO:0000255" key="6">
    <source>
        <dbReference type="PROSITE-ProRule" id="PRU00361"/>
    </source>
</evidence>
<evidence type="ECO:0000256" key="7">
    <source>
        <dbReference type="SAM" id="MobiDB-lite"/>
    </source>
</evidence>
<evidence type="ECO:0000269" key="8">
    <source>
    </source>
</evidence>
<evidence type="ECO:0000269" key="9">
    <source>
    </source>
</evidence>
<evidence type="ECO:0000269" key="10">
    <source>
    </source>
</evidence>
<evidence type="ECO:0000269" key="11">
    <source>
    </source>
</evidence>
<evidence type="ECO:0000269" key="12">
    <source>
    </source>
</evidence>
<evidence type="ECO:0000269" key="13">
    <source>
    </source>
</evidence>
<evidence type="ECO:0000269" key="14">
    <source>
    </source>
</evidence>
<evidence type="ECO:0000303" key="15">
    <source ref="1"/>
</evidence>
<evidence type="ECO:0000305" key="16"/>
<evidence type="ECO:0000312" key="17">
    <source>
        <dbReference type="EMBL" id="AAH63751.1"/>
    </source>
</evidence>
<evidence type="ECO:0000312" key="18">
    <source>
        <dbReference type="EMBL" id="AAM55531.1"/>
    </source>
</evidence>
<evidence type="ECO:0000312" key="19">
    <source>
        <dbReference type="EMBL" id="BAD32447.1"/>
    </source>
</evidence>
<evidence type="ECO:0000312" key="20">
    <source>
        <dbReference type="MGI" id="MGI:1920243"/>
    </source>
</evidence>
<evidence type="ECO:0007744" key="21">
    <source>
    </source>
</evidence>
<dbReference type="EMBL" id="AY113705">
    <property type="protein sequence ID" value="AAM55531.1"/>
    <property type="molecule type" value="mRNA"/>
</dbReference>
<dbReference type="EMBL" id="AK013715">
    <property type="protein sequence ID" value="BAB28966.3"/>
    <property type="molecule type" value="mRNA"/>
</dbReference>
<dbReference type="EMBL" id="AK033566">
    <property type="protein sequence ID" value="BAC28364.1"/>
    <property type="molecule type" value="mRNA"/>
</dbReference>
<dbReference type="EMBL" id="AK045438">
    <property type="protein sequence ID" value="BAC32367.1"/>
    <property type="molecule type" value="mRNA"/>
</dbReference>
<dbReference type="EMBL" id="AK049307">
    <property type="protein sequence ID" value="BAC33672.2"/>
    <property type="molecule type" value="mRNA"/>
</dbReference>
<dbReference type="EMBL" id="AK146356">
    <property type="protein sequence ID" value="BAE27108.1"/>
    <property type="molecule type" value="mRNA"/>
</dbReference>
<dbReference type="EMBL" id="BC019708">
    <property type="protein sequence ID" value="AAH19708.1"/>
    <property type="status" value="ALT_INIT"/>
    <property type="molecule type" value="mRNA"/>
</dbReference>
<dbReference type="EMBL" id="BC063751">
    <property type="protein sequence ID" value="AAH63751.1"/>
    <property type="molecule type" value="mRNA"/>
</dbReference>
<dbReference type="EMBL" id="AK173169">
    <property type="protein sequence ID" value="BAD32447.1"/>
    <property type="molecule type" value="mRNA"/>
</dbReference>
<dbReference type="CCDS" id="CCDS26883.1"/>
<dbReference type="RefSeq" id="NP_660256.1">
    <property type="nucleotide sequence ID" value="NM_145221.3"/>
</dbReference>
<dbReference type="SMR" id="Q8K3H0"/>
<dbReference type="BioGRID" id="215698">
    <property type="interactions" value="25"/>
</dbReference>
<dbReference type="CORUM" id="Q8K3H0"/>
<dbReference type="FunCoup" id="Q8K3H0">
    <property type="interactions" value="3591"/>
</dbReference>
<dbReference type="IntAct" id="Q8K3H0">
    <property type="interactions" value="8"/>
</dbReference>
<dbReference type="MINT" id="Q8K3H0"/>
<dbReference type="STRING" id="10090.ENSMUSP00000042875"/>
<dbReference type="iPTMnet" id="Q8K3H0"/>
<dbReference type="PhosphoSitePlus" id="Q8K3H0"/>
<dbReference type="SwissPalm" id="Q8K3H0"/>
<dbReference type="jPOST" id="Q8K3H0"/>
<dbReference type="PaxDb" id="10090-ENSMUSP00000042875"/>
<dbReference type="PeptideAtlas" id="Q8K3H0"/>
<dbReference type="ProteomicsDB" id="279800"/>
<dbReference type="Pumba" id="Q8K3H0"/>
<dbReference type="Antibodypedia" id="2775">
    <property type="antibodies" value="383 antibodies from 36 providers"/>
</dbReference>
<dbReference type="DNASU" id="72993"/>
<dbReference type="Ensembl" id="ENSMUST00000036570.5">
    <property type="protein sequence ID" value="ENSMUSP00000042875.5"/>
    <property type="gene ID" value="ENSMUSG00000040760.12"/>
</dbReference>
<dbReference type="GeneID" id="72993"/>
<dbReference type="KEGG" id="mmu:72993"/>
<dbReference type="UCSC" id="uc007sth.1">
    <property type="organism name" value="mouse"/>
</dbReference>
<dbReference type="AGR" id="MGI:1920243"/>
<dbReference type="CTD" id="26060"/>
<dbReference type="MGI" id="MGI:1920243">
    <property type="gene designation" value="Appl1"/>
</dbReference>
<dbReference type="VEuPathDB" id="HostDB:ENSMUSG00000040760"/>
<dbReference type="eggNOG" id="KOG0521">
    <property type="taxonomic scope" value="Eukaryota"/>
</dbReference>
<dbReference type="eggNOG" id="KOG3536">
    <property type="taxonomic scope" value="Eukaryota"/>
</dbReference>
<dbReference type="GeneTree" id="ENSGT00940000156624"/>
<dbReference type="HOGENOM" id="CLU_025935_0_0_1"/>
<dbReference type="InParanoid" id="Q8K3H0"/>
<dbReference type="OMA" id="CFQISAF"/>
<dbReference type="OrthoDB" id="10070851at2759"/>
<dbReference type="PhylomeDB" id="Q8K3H0"/>
<dbReference type="TreeFam" id="TF328669"/>
<dbReference type="Reactome" id="R-MMU-418889">
    <property type="pathway name" value="Caspase activation via Dependence Receptors in the absence of ligand"/>
</dbReference>
<dbReference type="BioGRID-ORCS" id="72993">
    <property type="hits" value="1 hit in 75 CRISPR screens"/>
</dbReference>
<dbReference type="ChiTaRS" id="Appl1">
    <property type="organism name" value="mouse"/>
</dbReference>
<dbReference type="PRO" id="PR:Q8K3H0"/>
<dbReference type="Proteomes" id="UP000000589">
    <property type="component" value="Chromosome 14"/>
</dbReference>
<dbReference type="RNAct" id="Q8K3H0">
    <property type="molecule type" value="protein"/>
</dbReference>
<dbReference type="Bgee" id="ENSMUSG00000040760">
    <property type="expression patterns" value="Expressed in primary oocyte and 247 other cell types or tissues"/>
</dbReference>
<dbReference type="GO" id="GO:0015629">
    <property type="term" value="C:actin cytoskeleton"/>
    <property type="evidence" value="ECO:0007669"/>
    <property type="project" value="Ensembl"/>
</dbReference>
<dbReference type="GO" id="GO:0005829">
    <property type="term" value="C:cytosol"/>
    <property type="evidence" value="ECO:0007669"/>
    <property type="project" value="Ensembl"/>
</dbReference>
<dbReference type="GO" id="GO:0005769">
    <property type="term" value="C:early endosome"/>
    <property type="evidence" value="ECO:0000314"/>
    <property type="project" value="UniProtKB"/>
</dbReference>
<dbReference type="GO" id="GO:0031901">
    <property type="term" value="C:early endosome membrane"/>
    <property type="evidence" value="ECO:0007669"/>
    <property type="project" value="UniProtKB-SubCell"/>
</dbReference>
<dbReference type="GO" id="GO:0032009">
    <property type="term" value="C:early phagosome"/>
    <property type="evidence" value="ECO:0000314"/>
    <property type="project" value="UniProtKB"/>
</dbReference>
<dbReference type="GO" id="GO:0005768">
    <property type="term" value="C:endosome"/>
    <property type="evidence" value="ECO:0000314"/>
    <property type="project" value="UniProtKB"/>
</dbReference>
<dbReference type="GO" id="GO:0010008">
    <property type="term" value="C:endosome membrane"/>
    <property type="evidence" value="ECO:0000250"/>
    <property type="project" value="UniProtKB"/>
</dbReference>
<dbReference type="GO" id="GO:0098978">
    <property type="term" value="C:glutamatergic synapse"/>
    <property type="evidence" value="ECO:0007669"/>
    <property type="project" value="Ensembl"/>
</dbReference>
<dbReference type="GO" id="GO:0044354">
    <property type="term" value="C:macropinosome"/>
    <property type="evidence" value="ECO:0000314"/>
    <property type="project" value="UniProtKB"/>
</dbReference>
<dbReference type="GO" id="GO:0016020">
    <property type="term" value="C:membrane"/>
    <property type="evidence" value="ECO:0000250"/>
    <property type="project" value="UniProtKB"/>
</dbReference>
<dbReference type="GO" id="GO:0005634">
    <property type="term" value="C:nucleus"/>
    <property type="evidence" value="ECO:0000250"/>
    <property type="project" value="UniProtKB"/>
</dbReference>
<dbReference type="GO" id="GO:0005886">
    <property type="term" value="C:plasma membrane"/>
    <property type="evidence" value="ECO:0000250"/>
    <property type="project" value="UniProtKB"/>
</dbReference>
<dbReference type="GO" id="GO:0001726">
    <property type="term" value="C:ruffle"/>
    <property type="evidence" value="ECO:0000314"/>
    <property type="project" value="UniProtKB"/>
</dbReference>
<dbReference type="GO" id="GO:0048487">
    <property type="term" value="F:beta-tubulin binding"/>
    <property type="evidence" value="ECO:0000250"/>
    <property type="project" value="UniProtKB"/>
</dbReference>
<dbReference type="GO" id="GO:0035091">
    <property type="term" value="F:phosphatidylinositol binding"/>
    <property type="evidence" value="ECO:0000250"/>
    <property type="project" value="UniProtKB"/>
</dbReference>
<dbReference type="GO" id="GO:0001786">
    <property type="term" value="F:phosphatidylserine binding"/>
    <property type="evidence" value="ECO:0000250"/>
    <property type="project" value="UniProtKB"/>
</dbReference>
<dbReference type="GO" id="GO:0042803">
    <property type="term" value="F:protein homodimerization activity"/>
    <property type="evidence" value="ECO:0000250"/>
    <property type="project" value="UniProtKB"/>
</dbReference>
<dbReference type="GO" id="GO:0043422">
    <property type="term" value="F:protein kinase B binding"/>
    <property type="evidence" value="ECO:0007669"/>
    <property type="project" value="Ensembl"/>
</dbReference>
<dbReference type="GO" id="GO:0044877">
    <property type="term" value="F:protein-containing complex binding"/>
    <property type="evidence" value="ECO:0007669"/>
    <property type="project" value="Ensembl"/>
</dbReference>
<dbReference type="GO" id="GO:0033211">
    <property type="term" value="P:adiponectin-activated signaling pathway"/>
    <property type="evidence" value="ECO:0000250"/>
    <property type="project" value="UniProtKB"/>
</dbReference>
<dbReference type="GO" id="GO:0035729">
    <property type="term" value="P:cellular response to hepatocyte growth factor stimulus"/>
    <property type="evidence" value="ECO:0000315"/>
    <property type="project" value="UniProtKB"/>
</dbReference>
<dbReference type="GO" id="GO:0008286">
    <property type="term" value="P:insulin receptor signaling pathway"/>
    <property type="evidence" value="ECO:0000250"/>
    <property type="project" value="UniProtKB"/>
</dbReference>
<dbReference type="GO" id="GO:0099558">
    <property type="term" value="P:maintenance of synapse structure"/>
    <property type="evidence" value="ECO:0007669"/>
    <property type="project" value="Ensembl"/>
</dbReference>
<dbReference type="GO" id="GO:1905450">
    <property type="term" value="P:negative regulation of Fc-gamma receptor signaling pathway involved in phagocytosis"/>
    <property type="evidence" value="ECO:0000315"/>
    <property type="project" value="UniProtKB"/>
</dbReference>
<dbReference type="GO" id="GO:1900017">
    <property type="term" value="P:positive regulation of cytokine production involved in inflammatory response"/>
    <property type="evidence" value="ECO:0000315"/>
    <property type="project" value="UniProtKB"/>
</dbReference>
<dbReference type="GO" id="GO:0046326">
    <property type="term" value="P:positive regulation of D-glucose import"/>
    <property type="evidence" value="ECO:0000250"/>
    <property type="project" value="UniProtKB"/>
</dbReference>
<dbReference type="GO" id="GO:1905303">
    <property type="term" value="P:positive regulation of macropinocytosis"/>
    <property type="evidence" value="ECO:0000315"/>
    <property type="project" value="UniProtKB"/>
</dbReference>
<dbReference type="GO" id="GO:0048023">
    <property type="term" value="P:positive regulation of melanin biosynthetic process"/>
    <property type="evidence" value="ECO:0000250"/>
    <property type="project" value="UniProtKB"/>
</dbReference>
<dbReference type="GO" id="GO:0006606">
    <property type="term" value="P:protein import into nucleus"/>
    <property type="evidence" value="ECO:0000250"/>
    <property type="project" value="UniProtKB"/>
</dbReference>
<dbReference type="GO" id="GO:0010762">
    <property type="term" value="P:regulation of fibroblast migration"/>
    <property type="evidence" value="ECO:0000315"/>
    <property type="project" value="UniProtKB"/>
</dbReference>
<dbReference type="GO" id="GO:2000045">
    <property type="term" value="P:regulation of G1/S transition of mitotic cell cycle"/>
    <property type="evidence" value="ECO:0000250"/>
    <property type="project" value="UniProtKB"/>
</dbReference>
<dbReference type="GO" id="GO:0045088">
    <property type="term" value="P:regulation of innate immune response"/>
    <property type="evidence" value="ECO:0000315"/>
    <property type="project" value="UniProtKB"/>
</dbReference>
<dbReference type="GO" id="GO:1903076">
    <property type="term" value="P:regulation of protein localization to plasma membrane"/>
    <property type="evidence" value="ECO:0007669"/>
    <property type="project" value="Ensembl"/>
</dbReference>
<dbReference type="GO" id="GO:0034143">
    <property type="term" value="P:regulation of toll-like receptor 4 signaling pathway"/>
    <property type="evidence" value="ECO:0000315"/>
    <property type="project" value="UniProtKB"/>
</dbReference>
<dbReference type="GO" id="GO:0007179">
    <property type="term" value="P:transforming growth factor beta receptor signaling pathway"/>
    <property type="evidence" value="ECO:0000250"/>
    <property type="project" value="UniProtKB"/>
</dbReference>
<dbReference type="CDD" id="cd13247">
    <property type="entry name" value="BAR-PH_APPL"/>
    <property type="match status" value="1"/>
</dbReference>
<dbReference type="CDD" id="cd07631">
    <property type="entry name" value="BAR_APPL1"/>
    <property type="match status" value="1"/>
</dbReference>
<dbReference type="CDD" id="cd13158">
    <property type="entry name" value="PTB_APPL"/>
    <property type="match status" value="1"/>
</dbReference>
<dbReference type="FunFam" id="1.20.1270.60:FF:000034">
    <property type="entry name" value="DCC-interacting protein 13-alpha isoform X2"/>
    <property type="match status" value="1"/>
</dbReference>
<dbReference type="FunFam" id="2.30.29.30:FF:000178">
    <property type="entry name" value="DCC-interacting protein 13-alpha isoform X2"/>
    <property type="match status" value="1"/>
</dbReference>
<dbReference type="FunFam" id="2.30.29.30:FF:000067">
    <property type="entry name" value="Putative DCC-interacting protein 13-beta isoform 2"/>
    <property type="match status" value="1"/>
</dbReference>
<dbReference type="Gene3D" id="1.20.1270.60">
    <property type="entry name" value="Arfaptin homology (AH) domain/BAR domain"/>
    <property type="match status" value="1"/>
</dbReference>
<dbReference type="Gene3D" id="2.30.29.30">
    <property type="entry name" value="Pleckstrin-homology domain (PH domain)/Phosphotyrosine-binding domain (PTB)"/>
    <property type="match status" value="2"/>
</dbReference>
<dbReference type="InterPro" id="IPR027267">
    <property type="entry name" value="AH/BAR_dom_sf"/>
</dbReference>
<dbReference type="InterPro" id="IPR004148">
    <property type="entry name" value="BAR_dom"/>
</dbReference>
<dbReference type="InterPro" id="IPR047181">
    <property type="entry name" value="DP13A/B"/>
</dbReference>
<dbReference type="InterPro" id="IPR037929">
    <property type="entry name" value="DP13A_BAR"/>
</dbReference>
<dbReference type="InterPro" id="IPR011993">
    <property type="entry name" value="PH-like_dom_sf"/>
</dbReference>
<dbReference type="InterPro" id="IPR001849">
    <property type="entry name" value="PH_domain"/>
</dbReference>
<dbReference type="InterPro" id="IPR047236">
    <property type="entry name" value="PH_DP13A/B"/>
</dbReference>
<dbReference type="InterPro" id="IPR006020">
    <property type="entry name" value="PTB/PI_dom"/>
</dbReference>
<dbReference type="InterPro" id="IPR047237">
    <property type="entry name" value="PTB_APPL"/>
</dbReference>
<dbReference type="PANTHER" id="PTHR46415">
    <property type="entry name" value="ADAPTOR PROTEIN, PHOSPHOTYROSINE INTERACTION, PH DOMAIN AND LEUCINE ZIPPER-CONTAINING 2"/>
    <property type="match status" value="1"/>
</dbReference>
<dbReference type="PANTHER" id="PTHR46415:SF3">
    <property type="entry name" value="DCC-INTERACTING PROTEIN 13-ALPHA"/>
    <property type="match status" value="1"/>
</dbReference>
<dbReference type="Pfam" id="PF16746">
    <property type="entry name" value="BAR_3"/>
    <property type="match status" value="1"/>
</dbReference>
<dbReference type="Pfam" id="PF00169">
    <property type="entry name" value="PH"/>
    <property type="match status" value="1"/>
</dbReference>
<dbReference type="Pfam" id="PF00640">
    <property type="entry name" value="PID"/>
    <property type="match status" value="1"/>
</dbReference>
<dbReference type="SMART" id="SM00233">
    <property type="entry name" value="PH"/>
    <property type="match status" value="1"/>
</dbReference>
<dbReference type="SMART" id="SM00462">
    <property type="entry name" value="PTB"/>
    <property type="match status" value="1"/>
</dbReference>
<dbReference type="SUPFAM" id="SSF103657">
    <property type="entry name" value="BAR/IMD domain-like"/>
    <property type="match status" value="1"/>
</dbReference>
<dbReference type="SUPFAM" id="SSF50729">
    <property type="entry name" value="PH domain-like"/>
    <property type="match status" value="2"/>
</dbReference>
<dbReference type="PROSITE" id="PS50003">
    <property type="entry name" value="PH_DOMAIN"/>
    <property type="match status" value="1"/>
</dbReference>
<dbReference type="PROSITE" id="PS01179">
    <property type="entry name" value="PID"/>
    <property type="match status" value="1"/>
</dbReference>
<protein>
    <recommendedName>
        <fullName evidence="16">DCC-interacting protein 13-alpha</fullName>
        <shortName evidence="15">Dip13-alpha</shortName>
    </recommendedName>
    <alternativeName>
        <fullName evidence="16">Adapter protein containing PH domain, PTB domain and leucine zipper motif 1</fullName>
    </alternativeName>
</protein>
<reference evidence="18" key="1">
    <citation type="submission" date="2002-05" db="EMBL/GenBank/DDBJ databases">
        <title>Cloning of mouse DIP13 alpha and beta.</title>
        <authorList>
            <person name="Chen Y.Q."/>
        </authorList>
    </citation>
    <scope>NUCLEOTIDE SEQUENCE [MRNA]</scope>
</reference>
<reference key="2">
    <citation type="journal article" date="2005" name="Science">
        <title>The transcriptional landscape of the mammalian genome.</title>
        <authorList>
            <person name="Carninci P."/>
            <person name="Kasukawa T."/>
            <person name="Katayama S."/>
            <person name="Gough J."/>
            <person name="Frith M.C."/>
            <person name="Maeda N."/>
            <person name="Oyama R."/>
            <person name="Ravasi T."/>
            <person name="Lenhard B."/>
            <person name="Wells C."/>
            <person name="Kodzius R."/>
            <person name="Shimokawa K."/>
            <person name="Bajic V.B."/>
            <person name="Brenner S.E."/>
            <person name="Batalov S."/>
            <person name="Forrest A.R."/>
            <person name="Zavolan M."/>
            <person name="Davis M.J."/>
            <person name="Wilming L.G."/>
            <person name="Aidinis V."/>
            <person name="Allen J.E."/>
            <person name="Ambesi-Impiombato A."/>
            <person name="Apweiler R."/>
            <person name="Aturaliya R.N."/>
            <person name="Bailey T.L."/>
            <person name="Bansal M."/>
            <person name="Baxter L."/>
            <person name="Beisel K.W."/>
            <person name="Bersano T."/>
            <person name="Bono H."/>
            <person name="Chalk A.M."/>
            <person name="Chiu K.P."/>
            <person name="Choudhary V."/>
            <person name="Christoffels A."/>
            <person name="Clutterbuck D.R."/>
            <person name="Crowe M.L."/>
            <person name="Dalla E."/>
            <person name="Dalrymple B.P."/>
            <person name="de Bono B."/>
            <person name="Della Gatta G."/>
            <person name="di Bernardo D."/>
            <person name="Down T."/>
            <person name="Engstrom P."/>
            <person name="Fagiolini M."/>
            <person name="Faulkner G."/>
            <person name="Fletcher C.F."/>
            <person name="Fukushima T."/>
            <person name="Furuno M."/>
            <person name="Futaki S."/>
            <person name="Gariboldi M."/>
            <person name="Georgii-Hemming P."/>
            <person name="Gingeras T.R."/>
            <person name="Gojobori T."/>
            <person name="Green R.E."/>
            <person name="Gustincich S."/>
            <person name="Harbers M."/>
            <person name="Hayashi Y."/>
            <person name="Hensch T.K."/>
            <person name="Hirokawa N."/>
            <person name="Hill D."/>
            <person name="Huminiecki L."/>
            <person name="Iacono M."/>
            <person name="Ikeo K."/>
            <person name="Iwama A."/>
            <person name="Ishikawa T."/>
            <person name="Jakt M."/>
            <person name="Kanapin A."/>
            <person name="Katoh M."/>
            <person name="Kawasawa Y."/>
            <person name="Kelso J."/>
            <person name="Kitamura H."/>
            <person name="Kitano H."/>
            <person name="Kollias G."/>
            <person name="Krishnan S.P."/>
            <person name="Kruger A."/>
            <person name="Kummerfeld S.K."/>
            <person name="Kurochkin I.V."/>
            <person name="Lareau L.F."/>
            <person name="Lazarevic D."/>
            <person name="Lipovich L."/>
            <person name="Liu J."/>
            <person name="Liuni S."/>
            <person name="McWilliam S."/>
            <person name="Madan Babu M."/>
            <person name="Madera M."/>
            <person name="Marchionni L."/>
            <person name="Matsuda H."/>
            <person name="Matsuzawa S."/>
            <person name="Miki H."/>
            <person name="Mignone F."/>
            <person name="Miyake S."/>
            <person name="Morris K."/>
            <person name="Mottagui-Tabar S."/>
            <person name="Mulder N."/>
            <person name="Nakano N."/>
            <person name="Nakauchi H."/>
            <person name="Ng P."/>
            <person name="Nilsson R."/>
            <person name="Nishiguchi S."/>
            <person name="Nishikawa S."/>
            <person name="Nori F."/>
            <person name="Ohara O."/>
            <person name="Okazaki Y."/>
            <person name="Orlando V."/>
            <person name="Pang K.C."/>
            <person name="Pavan W.J."/>
            <person name="Pavesi G."/>
            <person name="Pesole G."/>
            <person name="Petrovsky N."/>
            <person name="Piazza S."/>
            <person name="Reed J."/>
            <person name="Reid J.F."/>
            <person name="Ring B.Z."/>
            <person name="Ringwald M."/>
            <person name="Rost B."/>
            <person name="Ruan Y."/>
            <person name="Salzberg S.L."/>
            <person name="Sandelin A."/>
            <person name="Schneider C."/>
            <person name="Schoenbach C."/>
            <person name="Sekiguchi K."/>
            <person name="Semple C.A."/>
            <person name="Seno S."/>
            <person name="Sessa L."/>
            <person name="Sheng Y."/>
            <person name="Shibata Y."/>
            <person name="Shimada H."/>
            <person name="Shimada K."/>
            <person name="Silva D."/>
            <person name="Sinclair B."/>
            <person name="Sperling S."/>
            <person name="Stupka E."/>
            <person name="Sugiura K."/>
            <person name="Sultana R."/>
            <person name="Takenaka Y."/>
            <person name="Taki K."/>
            <person name="Tammoja K."/>
            <person name="Tan S.L."/>
            <person name="Tang S."/>
            <person name="Taylor M.S."/>
            <person name="Tegner J."/>
            <person name="Teichmann S.A."/>
            <person name="Ueda H.R."/>
            <person name="van Nimwegen E."/>
            <person name="Verardo R."/>
            <person name="Wei C.L."/>
            <person name="Yagi K."/>
            <person name="Yamanishi H."/>
            <person name="Zabarovsky E."/>
            <person name="Zhu S."/>
            <person name="Zimmer A."/>
            <person name="Hide W."/>
            <person name="Bult C."/>
            <person name="Grimmond S.M."/>
            <person name="Teasdale R.D."/>
            <person name="Liu E.T."/>
            <person name="Brusic V."/>
            <person name="Quackenbush J."/>
            <person name="Wahlestedt C."/>
            <person name="Mattick J.S."/>
            <person name="Hume D.A."/>
            <person name="Kai C."/>
            <person name="Sasaki D."/>
            <person name="Tomaru Y."/>
            <person name="Fukuda S."/>
            <person name="Kanamori-Katayama M."/>
            <person name="Suzuki M."/>
            <person name="Aoki J."/>
            <person name="Arakawa T."/>
            <person name="Iida J."/>
            <person name="Imamura K."/>
            <person name="Itoh M."/>
            <person name="Kato T."/>
            <person name="Kawaji H."/>
            <person name="Kawagashira N."/>
            <person name="Kawashima T."/>
            <person name="Kojima M."/>
            <person name="Kondo S."/>
            <person name="Konno H."/>
            <person name="Nakano K."/>
            <person name="Ninomiya N."/>
            <person name="Nishio T."/>
            <person name="Okada M."/>
            <person name="Plessy C."/>
            <person name="Shibata K."/>
            <person name="Shiraki T."/>
            <person name="Suzuki S."/>
            <person name="Tagami M."/>
            <person name="Waki K."/>
            <person name="Watahiki A."/>
            <person name="Okamura-Oho Y."/>
            <person name="Suzuki H."/>
            <person name="Kawai J."/>
            <person name="Hayashizaki Y."/>
        </authorList>
    </citation>
    <scope>NUCLEOTIDE SEQUENCE [LARGE SCALE MRNA]</scope>
    <source>
        <strain>C57BL/6J</strain>
        <strain>DBA/2J</strain>
        <tissue>Cecum</tissue>
        <tissue>Corpora quadrigemina</tissue>
        <tissue>Embryonic stem cell</tissue>
        <tissue>Hippocampus</tissue>
    </source>
</reference>
<reference evidence="17" key="3">
    <citation type="journal article" date="2004" name="Genome Res.">
        <title>The status, quality, and expansion of the NIH full-length cDNA project: the Mammalian Gene Collection (MGC).</title>
        <authorList>
            <consortium name="The MGC Project Team"/>
        </authorList>
    </citation>
    <scope>NUCLEOTIDE SEQUENCE [LARGE SCALE MRNA]</scope>
    <source>
        <tissue evidence="17">Limb</tissue>
        <tissue>Mammary gland</tissue>
    </source>
</reference>
<reference evidence="16 19" key="4">
    <citation type="journal article" date="2004" name="DNA Res.">
        <title>Prediction of the coding sequences of mouse homologues of KIAA gene: IV. The complete nucleotide sequences of 500 mouse KIAA-homologous cDNAs identified by screening of terminal sequences of cDNA clones randomly sampled from size-fractionated libraries.</title>
        <authorList>
            <person name="Okazaki N."/>
            <person name="Kikuno R."/>
            <person name="Ohara R."/>
            <person name="Inamoto S."/>
            <person name="Koseki H."/>
            <person name="Hiraoka S."/>
            <person name="Saga Y."/>
            <person name="Seino S."/>
            <person name="Nishimura M."/>
            <person name="Kaisho T."/>
            <person name="Hoshino K."/>
            <person name="Kitamura H."/>
            <person name="Nagase T."/>
            <person name="Ohara O."/>
            <person name="Koga H."/>
        </authorList>
    </citation>
    <scope>NUCLEOTIDE SEQUENCE [LARGE SCALE MRNA] OF 485-707</scope>
    <source>
        <tissue>Pancreatic islet</tissue>
    </source>
</reference>
<reference key="5">
    <citation type="journal article" date="2004" name="Mol. Cell. Proteomics">
        <title>Phosphoproteomic analysis of the developing mouse brain.</title>
        <authorList>
            <person name="Ballif B.A."/>
            <person name="Villen J."/>
            <person name="Beausoleil S.A."/>
            <person name="Schwartz D."/>
            <person name="Gygi S.P."/>
        </authorList>
    </citation>
    <scope>IDENTIFICATION BY MASS SPECTROMETRY [LARGE SCALE ANALYSIS]</scope>
    <source>
        <tissue>Embryonic brain</tissue>
    </source>
</reference>
<reference key="6">
    <citation type="journal article" date="2007" name="Proc. Natl. Acad. Sci. U.S.A.">
        <title>Large-scale phosphorylation analysis of mouse liver.</title>
        <authorList>
            <person name="Villen J."/>
            <person name="Beausoleil S.A."/>
            <person name="Gerber S.A."/>
            <person name="Gygi S.P."/>
        </authorList>
    </citation>
    <scope>IDENTIFICATION BY MASS SPECTROMETRY [LARGE SCALE ANALYSIS]</scope>
    <source>
        <tissue>Liver</tissue>
    </source>
</reference>
<reference key="7">
    <citation type="journal article" date="2009" name="J. Biol. Chem.">
        <title>Yin-Yang regulation of adiponectin signaling by APPL isoforms in muscle cells.</title>
        <authorList>
            <person name="Wang C."/>
            <person name="Xin X."/>
            <person name="Xiang R."/>
            <person name="Ramos F.J."/>
            <person name="Liu M."/>
            <person name="Lee H.J."/>
            <person name="Chen H."/>
            <person name="Mao X."/>
            <person name="Kikani C.K."/>
            <person name="Liu F."/>
            <person name="Dong L.Q."/>
        </authorList>
    </citation>
    <scope>INTERACTION WITH ADIPOR1</scope>
    <scope>TISSUE SPECIFICITY</scope>
</reference>
<reference key="8">
    <citation type="journal article" date="2010" name="Cell">
        <title>A tissue-specific atlas of mouse protein phosphorylation and expression.</title>
        <authorList>
            <person name="Huttlin E.L."/>
            <person name="Jedrychowski M.P."/>
            <person name="Elias J.E."/>
            <person name="Goswami T."/>
            <person name="Rad R."/>
            <person name="Beausoleil S.A."/>
            <person name="Villen J."/>
            <person name="Haas W."/>
            <person name="Sowa M.E."/>
            <person name="Gygi S.P."/>
        </authorList>
    </citation>
    <scope>PHOSPHORYLATION [LARGE SCALE ANALYSIS] AT SER-691 AND SER-694</scope>
    <scope>IDENTIFICATION BY MASS SPECTROMETRY [LARGE SCALE ANALYSIS]</scope>
    <source>
        <tissue>Brain</tissue>
        <tissue>Brown adipose tissue</tissue>
        <tissue>Heart</tissue>
        <tissue>Kidney</tissue>
        <tissue>Liver</tissue>
        <tissue>Lung</tissue>
        <tissue>Pancreas</tissue>
        <tissue>Spleen</tissue>
        <tissue>Testis</tissue>
    </source>
</reference>
<reference key="9">
    <citation type="journal article" date="2010" name="Proc. Natl. Acad. Sci. U.S.A.">
        <title>Two closely related endocytic proteins that share a common OCRL-binding motif with APPL1.</title>
        <authorList>
            <person name="Swan L.E."/>
            <person name="Tomasini L."/>
            <person name="Pirruccello M."/>
            <person name="Lunardi J."/>
            <person name="De Camilli P."/>
        </authorList>
    </citation>
    <scope>INTERACTION WITH OCRL</scope>
</reference>
<reference key="10">
    <citation type="journal article" date="2011" name="Mol. Biol. Cell">
        <title>Retrolinkin cooperates with endophilin A1 to mediate BDNF-TrkB early endocytic trafficking and signaling from early endosomes.</title>
        <authorList>
            <person name="Fu X."/>
            <person name="Yang Y."/>
            <person name="Xu C."/>
            <person name="Niu Y."/>
            <person name="Chen T."/>
            <person name="Zhou Q."/>
            <person name="Liu J.J."/>
        </authorList>
    </citation>
    <scope>INTERACTION WITH NTRK2</scope>
    <scope>SUBCELLULAR LOCATION</scope>
</reference>
<reference key="11">
    <citation type="journal article" date="2014" name="Cell Biosci.">
        <title>Absence of Appl2 sensitizes endotoxin shock through activation of PI3K/Akt pathway.</title>
        <authorList>
            <person name="Mao L."/>
            <person name="Lin W."/>
            <person name="Nie T."/>
            <person name="Hui X."/>
            <person name="Gao X."/>
            <person name="Li K."/>
            <person name="Ding M."/>
            <person name="Tang X."/>
            <person name="Li P."/>
            <person name="Wang Y."/>
            <person name="Xu A."/>
            <person name="Liu P."/>
            <person name="Wu D."/>
        </authorList>
    </citation>
    <scope>FUNCTION</scope>
    <scope>DISRUPTION PHENOTYPE</scope>
    <scope>INTERACTION WITH PIK3R1 AND APPL2</scope>
</reference>
<reference key="12">
    <citation type="journal article" date="2015" name="Mol. Biol. Cell">
        <title>Rab31 and APPL2 enhance FcgammaR-mediated phagocytosis through PI3K/Akt signaling in macrophages.</title>
        <authorList>
            <person name="Yeo J.C."/>
            <person name="Wall A.A."/>
            <person name="Luo L."/>
            <person name="Stow J.L."/>
        </authorList>
    </citation>
    <scope>SUBCELLULAR LOCATION</scope>
    <scope>FUNCTION</scope>
</reference>
<reference key="13">
    <citation type="journal article" date="2016" name="J. Cell. Physiol.">
        <title>Appl1 and Appl2 are Expendable for Mouse Development But Are Essential for HGF-Induced Akt Activation and Migration in Mouse Embryonic Fibroblasts.</title>
        <authorList>
            <person name="Tan Y."/>
            <person name="Xin X."/>
            <person name="Coffey F.J."/>
            <person name="Wiest D.L."/>
            <person name="Dong L.Q."/>
            <person name="Testa J.R."/>
        </authorList>
    </citation>
    <scope>DISRUPTION PHENOTYPE</scope>
    <scope>FUNCTION</scope>
</reference>
<reference key="14">
    <citation type="journal article" date="2016" name="Traffic">
        <title>Distinct Roles for APPL1 and APPL2 in Regulating Toll-like Receptor 4 Signaling in Macrophages.</title>
        <authorList>
            <person name="Yeo J.C."/>
            <person name="Wall A.A."/>
            <person name="Luo L."/>
            <person name="Condon N.D."/>
            <person name="Stow J.L."/>
        </authorList>
    </citation>
    <scope>SUBCELLULAR LOCATION</scope>
    <scope>FUNCTION</scope>
</reference>
<accession>Q8K3H0</accession>
<accession>Q3UJP7</accession>
<accession>Q69ZJ9</accession>
<accession>Q8BWZ8</accession>
<accession>Q8VCJ8</accession>
<accession>Q9CUW4</accession>
<sequence length="707" mass="79328">MPGIDKLPIEETLEDSPQTRSLLGVFEEDATAISNYMNQLYQAMHRIYDAQNELSAATHLTSKLLKEYEKQRFPLGGDDEVMSSTLQQFSKVIDELSSCHAVLSTQLADAMMFPISQFKERDLKEILTLKEVFQIASNDHDAAINRYSRLSKKRENDKVKYEVTEDVYTSRKKQHQTMMHYFCALNTLQYKKKIALLEPLLGYMQAQISFFKMGSENLNGQLEEFLANIGTSVQNVRREMDGDVETMQQTIEDLEVASDPLYLPDPDPTKFPINRNLTRKAGYLNARNKTGLVSSTWDRQFYFTQGGNLMSQARGDVAGGLAMDIDNCSVMAVDCEDRRYCFQITSFDGKKSSILQAESKKDHEEWICTINNISKQIYLSENPEETAARVNQSALEAVTPSPSFQQRHESLRPGGQSRPPTARTSSSGSLGSESTNLAALSLDSLVAPDTPIQFDIISPVCEDQPGQAKAFGQGGRRTNPFGESGGSTKSETEDSILHQLFIVRFLGSMEVKSDDHPDVVYETMRQILAARAIHNIFRMTESHLLVTCDCLKLIDPQTQVTRLTFPLPCVVLYATHQENKRLFGFVLRTSGGRSESNLSSVCYIFESNNEGEKICDSVGLAKQIALHAELDRRASEKQKEIERVKEKQQKELSKQKQIEKDLEEQSRLIAASSRPNQAGSEGQLVLSSSQSEESDLGEEGKKRESEA</sequence>
<keyword id="KW-0131">Cell cycle</keyword>
<keyword id="KW-0966">Cell projection</keyword>
<keyword id="KW-0175">Coiled coil</keyword>
<keyword id="KW-0963">Cytoplasm</keyword>
<keyword id="KW-0968">Cytoplasmic vesicle</keyword>
<keyword id="KW-0967">Endosome</keyword>
<keyword id="KW-0472">Membrane</keyword>
<keyword id="KW-0539">Nucleus</keyword>
<keyword id="KW-0597">Phosphoprotein</keyword>
<keyword id="KW-1185">Reference proteome</keyword>
<name>DP13A_MOUSE</name>